<feature type="chain" id="PRO_0000052943" description="Hemoglobin subunit beta-A/B">
    <location>
        <begin position="1"/>
        <end position="147"/>
    </location>
</feature>
<feature type="domain" description="Globin" evidence="1">
    <location>
        <begin position="2"/>
        <end position="147"/>
    </location>
</feature>
<feature type="binding site" description="distal binding residue">
    <location>
        <position position="63"/>
    </location>
    <ligand>
        <name>heme b</name>
        <dbReference type="ChEBI" id="CHEBI:60344"/>
    </ligand>
    <ligandPart>
        <name>Fe</name>
        <dbReference type="ChEBI" id="CHEBI:18248"/>
    </ligandPart>
</feature>
<feature type="binding site" description="proximal binding residue">
    <location>
        <position position="92"/>
    </location>
    <ligand>
        <name>heme b</name>
        <dbReference type="ChEBI" id="CHEBI:60344"/>
    </ligand>
    <ligandPart>
        <name>Fe</name>
        <dbReference type="ChEBI" id="CHEBI:18248"/>
    </ligandPart>
</feature>
<feature type="sequence variant" description="In beta-B chain." evidence="2">
    <original>A</original>
    <variation>G</variation>
    <location>
        <position position="13"/>
    </location>
</feature>
<feature type="sequence variant" description="In beta-B chain." evidence="2">
    <original>F</original>
    <variation>Y</variation>
    <location>
        <position position="41"/>
    </location>
</feature>
<feature type="sequence variant" description="In beta-B chain." evidence="2">
    <original>G</original>
    <variation>A</variation>
    <location>
        <position position="122"/>
    </location>
</feature>
<feature type="sequence variant" description="In beta-B chain." evidence="2">
    <original>K</original>
    <variation>C</variation>
    <location>
        <position position="143"/>
    </location>
</feature>
<feature type="sequence conflict" description="In Ref. 2; AA sequence." evidence="3" ref="2">
    <original>E</original>
    <variation>Q</variation>
    <location>
        <position position="26"/>
    </location>
</feature>
<feature type="sequence conflict" description="In Ref. 2; AA sequence." evidence="3" ref="2">
    <original>C</original>
    <variation>R</variation>
    <location>
        <position position="31"/>
    </location>
</feature>
<name>HBB_CYPCA</name>
<comment type="function">
    <text>Involved in oxygen transport from gills to the various peripheral tissues.</text>
</comment>
<comment type="subunit">
    <text>Heterotetramer of two alpha chains and two beta chains.</text>
</comment>
<comment type="tissue specificity">
    <text>Red blood cells.</text>
</comment>
<comment type="polymorphism">
    <text evidence="2">There are two alleles. The sequence shown is that of beta-A.</text>
</comment>
<comment type="similarity">
    <text evidence="1">Belongs to the globin family.</text>
</comment>
<reference key="1">
    <citation type="journal article" date="1980" name="Hoppe-Seyler's Z. Physiol. Chem.">
        <title>Hemoglobins, XXXV. The sequence of the beta A- and beta B-Chains of the hemoglobins of the carp (Cyprinus carpio L.).</title>
        <authorList>
            <person name="Grujic-Injac B."/>
            <person name="Braunitzer G."/>
            <person name="Stangl A."/>
        </authorList>
    </citation>
    <scope>PROTEIN SEQUENCE</scope>
</reference>
<reference key="2">
    <citation type="journal article" date="1994" name="J. Comp. Physiol. B">
        <title>Subunit structures of multiple hemoglobins in carp.</title>
        <authorList>
            <person name="Ohkudo N."/>
            <person name="Watabe S."/>
            <person name="Oshiro T."/>
            <person name="Takashima F."/>
            <person name="Nakajima H."/>
        </authorList>
    </citation>
    <scope>PROTEIN SEQUENCE OF 1-40</scope>
</reference>
<accession>P02139</accession>
<accession>Q9PRW6</accession>
<accession>Q9PRW7</accession>
<dbReference type="PIR" id="A02459">
    <property type="entry name" value="HBCAA"/>
</dbReference>
<dbReference type="SMR" id="P02139"/>
<dbReference type="Proteomes" id="UP000694384">
    <property type="component" value="Unplaced"/>
</dbReference>
<dbReference type="Proteomes" id="UP000694427">
    <property type="component" value="Unplaced"/>
</dbReference>
<dbReference type="Proteomes" id="UP000694700">
    <property type="component" value="Unplaced"/>
</dbReference>
<dbReference type="Proteomes" id="UP000694701">
    <property type="component" value="Unplaced"/>
</dbReference>
<dbReference type="Proteomes" id="UP001155660">
    <property type="component" value="Unplaced"/>
</dbReference>
<dbReference type="GO" id="GO:0072562">
    <property type="term" value="C:blood microparticle"/>
    <property type="evidence" value="ECO:0007669"/>
    <property type="project" value="TreeGrafter"/>
</dbReference>
<dbReference type="GO" id="GO:0031838">
    <property type="term" value="C:haptoglobin-hemoglobin complex"/>
    <property type="evidence" value="ECO:0007669"/>
    <property type="project" value="TreeGrafter"/>
</dbReference>
<dbReference type="GO" id="GO:0005833">
    <property type="term" value="C:hemoglobin complex"/>
    <property type="evidence" value="ECO:0007669"/>
    <property type="project" value="InterPro"/>
</dbReference>
<dbReference type="GO" id="GO:0031720">
    <property type="term" value="F:haptoglobin binding"/>
    <property type="evidence" value="ECO:0007669"/>
    <property type="project" value="TreeGrafter"/>
</dbReference>
<dbReference type="GO" id="GO:0020037">
    <property type="term" value="F:heme binding"/>
    <property type="evidence" value="ECO:0007669"/>
    <property type="project" value="InterPro"/>
</dbReference>
<dbReference type="GO" id="GO:0046872">
    <property type="term" value="F:metal ion binding"/>
    <property type="evidence" value="ECO:0007669"/>
    <property type="project" value="UniProtKB-KW"/>
</dbReference>
<dbReference type="GO" id="GO:0043177">
    <property type="term" value="F:organic acid binding"/>
    <property type="evidence" value="ECO:0007669"/>
    <property type="project" value="TreeGrafter"/>
</dbReference>
<dbReference type="GO" id="GO:0019825">
    <property type="term" value="F:oxygen binding"/>
    <property type="evidence" value="ECO:0007669"/>
    <property type="project" value="InterPro"/>
</dbReference>
<dbReference type="GO" id="GO:0005344">
    <property type="term" value="F:oxygen carrier activity"/>
    <property type="evidence" value="ECO:0007669"/>
    <property type="project" value="UniProtKB-KW"/>
</dbReference>
<dbReference type="GO" id="GO:0004601">
    <property type="term" value="F:peroxidase activity"/>
    <property type="evidence" value="ECO:0007669"/>
    <property type="project" value="TreeGrafter"/>
</dbReference>
<dbReference type="GO" id="GO:0042744">
    <property type="term" value="P:hydrogen peroxide catabolic process"/>
    <property type="evidence" value="ECO:0007669"/>
    <property type="project" value="TreeGrafter"/>
</dbReference>
<dbReference type="CDD" id="cd08925">
    <property type="entry name" value="Hb-beta-like"/>
    <property type="match status" value="1"/>
</dbReference>
<dbReference type="FunFam" id="1.10.490.10:FF:000001">
    <property type="entry name" value="Hemoglobin subunit beta"/>
    <property type="match status" value="1"/>
</dbReference>
<dbReference type="Gene3D" id="1.10.490.10">
    <property type="entry name" value="Globins"/>
    <property type="match status" value="1"/>
</dbReference>
<dbReference type="InterPro" id="IPR000971">
    <property type="entry name" value="Globin"/>
</dbReference>
<dbReference type="InterPro" id="IPR009050">
    <property type="entry name" value="Globin-like_sf"/>
</dbReference>
<dbReference type="InterPro" id="IPR012292">
    <property type="entry name" value="Globin/Proto"/>
</dbReference>
<dbReference type="InterPro" id="IPR002337">
    <property type="entry name" value="Hemoglobin_b"/>
</dbReference>
<dbReference type="InterPro" id="IPR050056">
    <property type="entry name" value="Hemoglobin_oxygen_transport"/>
</dbReference>
<dbReference type="PANTHER" id="PTHR11442">
    <property type="entry name" value="HEMOGLOBIN FAMILY MEMBER"/>
    <property type="match status" value="1"/>
</dbReference>
<dbReference type="PANTHER" id="PTHR11442:SF102">
    <property type="entry name" value="HEMOGLOBIN SUBUNIT BETA-1-RELATED"/>
    <property type="match status" value="1"/>
</dbReference>
<dbReference type="Pfam" id="PF00042">
    <property type="entry name" value="Globin"/>
    <property type="match status" value="1"/>
</dbReference>
<dbReference type="PRINTS" id="PR00814">
    <property type="entry name" value="BETAHAEM"/>
</dbReference>
<dbReference type="SUPFAM" id="SSF46458">
    <property type="entry name" value="Globin-like"/>
    <property type="match status" value="1"/>
</dbReference>
<dbReference type="PROSITE" id="PS01033">
    <property type="entry name" value="GLOBIN"/>
    <property type="match status" value="1"/>
</dbReference>
<protein>
    <recommendedName>
        <fullName>Hemoglobin subunit beta-A/B</fullName>
    </recommendedName>
    <alternativeName>
        <fullName>Hemoglobin beta-A/B chain</fullName>
    </alternativeName>
    <alternativeName>
        <fullName>Hemoglobin subunit beta-1/2</fullName>
    </alternativeName>
</protein>
<organism>
    <name type="scientific">Cyprinus carpio</name>
    <name type="common">Common carp</name>
    <dbReference type="NCBI Taxonomy" id="7962"/>
    <lineage>
        <taxon>Eukaryota</taxon>
        <taxon>Metazoa</taxon>
        <taxon>Chordata</taxon>
        <taxon>Craniata</taxon>
        <taxon>Vertebrata</taxon>
        <taxon>Euteleostomi</taxon>
        <taxon>Actinopterygii</taxon>
        <taxon>Neopterygii</taxon>
        <taxon>Teleostei</taxon>
        <taxon>Ostariophysi</taxon>
        <taxon>Cypriniformes</taxon>
        <taxon>Cyprinidae</taxon>
        <taxon>Cyprininae</taxon>
        <taxon>Cyprinus</taxon>
    </lineage>
</organism>
<sequence length="147" mass="16262">VEWTDAERSAIIALWGKLNPDELGPEALARCLIVYPWTQRFFASYGNLSSPAAIMGNPKVAAHGRTVEGGLMRAIKDMDNIKATYAPLSVMHSEKLHVDPDNFRLLADCITVCAAMKFGPSGFSPNVQEAWQKFLSVVVNALKRQYH</sequence>
<proteinExistence type="evidence at protein level"/>
<keyword id="KW-0903">Direct protein sequencing</keyword>
<keyword id="KW-0349">Heme</keyword>
<keyword id="KW-0408">Iron</keyword>
<keyword id="KW-0479">Metal-binding</keyword>
<keyword id="KW-0561">Oxygen transport</keyword>
<keyword id="KW-1185">Reference proteome</keyword>
<keyword id="KW-0813">Transport</keyword>
<evidence type="ECO:0000255" key="1">
    <source>
        <dbReference type="PROSITE-ProRule" id="PRU00238"/>
    </source>
</evidence>
<evidence type="ECO:0000269" key="2">
    <source>
    </source>
</evidence>
<evidence type="ECO:0000305" key="3"/>